<accession>P35783</accession>
<proteinExistence type="evidence at protein level"/>
<feature type="chain" id="PRO_0000211541" description="Venom allergen 5">
    <location>
        <begin position="1"/>
        <end position="204"/>
    </location>
</feature>
<feature type="domain" description="SCP">
    <location>
        <begin position="45"/>
        <end position="189"/>
    </location>
</feature>
<feature type="disulfide bond" evidence="1">
    <location>
        <begin position="4"/>
        <end position="17"/>
    </location>
</feature>
<feature type="disulfide bond" evidence="1">
    <location>
        <begin position="8"/>
        <end position="101"/>
    </location>
</feature>
<feature type="disulfide bond" evidence="1">
    <location>
        <begin position="26"/>
        <end position="94"/>
    </location>
</feature>
<feature type="disulfide bond" evidence="1">
    <location>
        <begin position="170"/>
        <end position="187"/>
    </location>
</feature>
<reference key="1">
    <citation type="journal article" date="1993" name="J. Allergy Clin. Immunol.">
        <title>Allergens in Hymenoptera venom. XXV: the amino acid sequences of antigen 5 molecules and the structural basis of antigenic cross-reactivity.</title>
        <authorList>
            <person name="Hoffman D.R."/>
        </authorList>
    </citation>
    <scope>PROTEIN SEQUENCE</scope>
    <source>
        <tissue>Venom</tissue>
    </source>
</reference>
<name>VA5_VESFL</name>
<evidence type="ECO:0000250" key="1"/>
<evidence type="ECO:0000305" key="2"/>
<sequence>NNYCKIKCLKGGVHTACKYGSLKPNCGNKVVVSYGLTKQEKQDILKEHNDFRQKIARGLETRGNPGPQPPAKNMKNLVWNDELAYVAQVWANQCQYGHDTCRDIAKYQVGQNVALTGSTAAKYDDPVKLVKMWEDEVKDYNPKKKFSGNNFLKTGHYTQMVWANTKEVGCGSIKFIQEKWHKHYLVCNYGPSGNFQNEELYQTK</sequence>
<comment type="function">
    <text>May have an ancestral function in the promotion of ovum fertilization by sperm.</text>
</comment>
<comment type="subcellular location">
    <subcellularLocation>
        <location>Secreted</location>
    </subcellularLocation>
</comment>
<comment type="tissue specificity">
    <text>Expressed by the venom gland.</text>
</comment>
<comment type="allergen">
    <text>Causes an allergic reaction in human.</text>
</comment>
<comment type="similarity">
    <text evidence="2">Belongs to the CRISP family. Venom allergen 5-like subfamily.</text>
</comment>
<keyword id="KW-0020">Allergen</keyword>
<keyword id="KW-0903">Direct protein sequencing</keyword>
<keyword id="KW-1015">Disulfide bond</keyword>
<keyword id="KW-0964">Secreted</keyword>
<dbReference type="PIR" id="A44583">
    <property type="entry name" value="A44583"/>
</dbReference>
<dbReference type="SMR" id="P35783"/>
<dbReference type="Allergome" id="3512">
    <property type="allergen name" value="Ves f 5.0101"/>
</dbReference>
<dbReference type="Allergome" id="658">
    <property type="allergen name" value="Ves f 5"/>
</dbReference>
<dbReference type="GO" id="GO:0005576">
    <property type="term" value="C:extracellular region"/>
    <property type="evidence" value="ECO:0007669"/>
    <property type="project" value="UniProtKB-SubCell"/>
</dbReference>
<dbReference type="CDD" id="cd05380">
    <property type="entry name" value="CAP_euk"/>
    <property type="match status" value="1"/>
</dbReference>
<dbReference type="Gene3D" id="3.40.33.10">
    <property type="entry name" value="CAP"/>
    <property type="match status" value="1"/>
</dbReference>
<dbReference type="InterPro" id="IPR018244">
    <property type="entry name" value="Allrgn_V5/Tpx1_CS"/>
</dbReference>
<dbReference type="InterPro" id="IPR014044">
    <property type="entry name" value="CAP_dom"/>
</dbReference>
<dbReference type="InterPro" id="IPR035940">
    <property type="entry name" value="CAP_sf"/>
</dbReference>
<dbReference type="InterPro" id="IPR001283">
    <property type="entry name" value="CRISP-related"/>
</dbReference>
<dbReference type="InterPro" id="IPR002413">
    <property type="entry name" value="V5_allergen-like"/>
</dbReference>
<dbReference type="PANTHER" id="PTHR10334">
    <property type="entry name" value="CYSTEINE-RICH SECRETORY PROTEIN-RELATED"/>
    <property type="match status" value="1"/>
</dbReference>
<dbReference type="Pfam" id="PF00188">
    <property type="entry name" value="CAP"/>
    <property type="match status" value="1"/>
</dbReference>
<dbReference type="PRINTS" id="PR00838">
    <property type="entry name" value="V5ALLERGEN"/>
</dbReference>
<dbReference type="PRINTS" id="PR00837">
    <property type="entry name" value="V5TPXLIKE"/>
</dbReference>
<dbReference type="SMART" id="SM00198">
    <property type="entry name" value="SCP"/>
    <property type="match status" value="1"/>
</dbReference>
<dbReference type="SUPFAM" id="SSF55797">
    <property type="entry name" value="PR-1-like"/>
    <property type="match status" value="1"/>
</dbReference>
<dbReference type="PROSITE" id="PS01009">
    <property type="entry name" value="CRISP_1"/>
    <property type="match status" value="1"/>
</dbReference>
<dbReference type="PROSITE" id="PS01010">
    <property type="entry name" value="CRISP_2"/>
    <property type="match status" value="1"/>
</dbReference>
<organism>
    <name type="scientific">Vespula flavopilosa</name>
    <name type="common">Downy yellowjacket</name>
    <dbReference type="NCBI Taxonomy" id="30211"/>
    <lineage>
        <taxon>Eukaryota</taxon>
        <taxon>Metazoa</taxon>
        <taxon>Ecdysozoa</taxon>
        <taxon>Arthropoda</taxon>
        <taxon>Hexapoda</taxon>
        <taxon>Insecta</taxon>
        <taxon>Pterygota</taxon>
        <taxon>Neoptera</taxon>
        <taxon>Endopterygota</taxon>
        <taxon>Hymenoptera</taxon>
        <taxon>Apocrita</taxon>
        <taxon>Aculeata</taxon>
        <taxon>Vespoidea</taxon>
        <taxon>Vespidae</taxon>
        <taxon>Vespinae</taxon>
        <taxon>Vespula</taxon>
    </lineage>
</organism>
<protein>
    <recommendedName>
        <fullName>Venom allergen 5</fullName>
    </recommendedName>
    <alternativeName>
        <fullName>Allergen Ves f V</fullName>
    </alternativeName>
    <alternativeName>
        <fullName>Antigen 5</fullName>
        <shortName>Ag5</shortName>
    </alternativeName>
    <alternativeName>
        <fullName>Cysteine-rich venom protein</fullName>
        <shortName>CRVP</shortName>
    </alternativeName>
    <allergenName>Ves f 5</allergenName>
</protein>